<dbReference type="EC" id="1.10.3.17" evidence="1"/>
<dbReference type="EMBL" id="AE005674">
    <property type="protein sequence ID" value="AAN43363.1"/>
    <property type="status" value="ALT_INIT"/>
    <property type="molecule type" value="Genomic_DNA"/>
</dbReference>
<dbReference type="EMBL" id="AE014073">
    <property type="protein sequence ID" value="AAP16866.1"/>
    <property type="status" value="ALT_INIT"/>
    <property type="molecule type" value="Genomic_DNA"/>
</dbReference>
<dbReference type="RefSeq" id="NP_707656.3">
    <property type="nucleotide sequence ID" value="NC_004337.2"/>
</dbReference>
<dbReference type="RefSeq" id="WP_000428998.1">
    <property type="nucleotide sequence ID" value="NZ_WPGW01000197.1"/>
</dbReference>
<dbReference type="SMR" id="P0ABE6"/>
<dbReference type="STRING" id="198214.SF1794"/>
<dbReference type="PaxDb" id="198214-SF1794"/>
<dbReference type="GeneID" id="1025003"/>
<dbReference type="KEGG" id="sfl:SF1794"/>
<dbReference type="KEGG" id="sfx:S1478"/>
<dbReference type="PATRIC" id="fig|198214.7.peg.2128"/>
<dbReference type="HOGENOM" id="CLU_095321_3_0_6"/>
<dbReference type="Proteomes" id="UP000001006">
    <property type="component" value="Chromosome"/>
</dbReference>
<dbReference type="Proteomes" id="UP000002673">
    <property type="component" value="Chromosome"/>
</dbReference>
<dbReference type="GO" id="GO:0005886">
    <property type="term" value="C:plasma membrane"/>
    <property type="evidence" value="ECO:0007669"/>
    <property type="project" value="UniProtKB-SubCell"/>
</dbReference>
<dbReference type="GO" id="GO:0009055">
    <property type="term" value="F:electron transfer activity"/>
    <property type="evidence" value="ECO:0007669"/>
    <property type="project" value="InterPro"/>
</dbReference>
<dbReference type="GO" id="GO:0020037">
    <property type="term" value="F:heme binding"/>
    <property type="evidence" value="ECO:0007669"/>
    <property type="project" value="TreeGrafter"/>
</dbReference>
<dbReference type="GO" id="GO:0046872">
    <property type="term" value="F:metal ion binding"/>
    <property type="evidence" value="ECO:0007669"/>
    <property type="project" value="UniProtKB-KW"/>
</dbReference>
<dbReference type="GO" id="GO:0016491">
    <property type="term" value="F:oxidoreductase activity"/>
    <property type="evidence" value="ECO:0007669"/>
    <property type="project" value="UniProtKB-KW"/>
</dbReference>
<dbReference type="GO" id="GO:0022904">
    <property type="term" value="P:respiratory electron transport chain"/>
    <property type="evidence" value="ECO:0007669"/>
    <property type="project" value="InterPro"/>
</dbReference>
<dbReference type="InterPro" id="IPR011577">
    <property type="entry name" value="Cyt_b561_bac/Ni-Hgenase"/>
</dbReference>
<dbReference type="InterPro" id="IPR052168">
    <property type="entry name" value="Cytochrome_b561_oxidase"/>
</dbReference>
<dbReference type="InterPro" id="IPR016174">
    <property type="entry name" value="Di-haem_cyt_TM"/>
</dbReference>
<dbReference type="NCBIfam" id="NF008566">
    <property type="entry name" value="PRK11513.1"/>
    <property type="match status" value="1"/>
</dbReference>
<dbReference type="PANTHER" id="PTHR30529">
    <property type="entry name" value="CYTOCHROME B561"/>
    <property type="match status" value="1"/>
</dbReference>
<dbReference type="PANTHER" id="PTHR30529:SF4">
    <property type="entry name" value="SUPEROXIDE OXIDASE CYBB"/>
    <property type="match status" value="1"/>
</dbReference>
<dbReference type="Pfam" id="PF01292">
    <property type="entry name" value="Ni_hydr_CYTB"/>
    <property type="match status" value="1"/>
</dbReference>
<dbReference type="SUPFAM" id="SSF81342">
    <property type="entry name" value="Transmembrane di-heme cytochromes"/>
    <property type="match status" value="1"/>
</dbReference>
<proteinExistence type="inferred from homology"/>
<keyword id="KW-0997">Cell inner membrane</keyword>
<keyword id="KW-1003">Cell membrane</keyword>
<keyword id="KW-0249">Electron transport</keyword>
<keyword id="KW-0349">Heme</keyword>
<keyword id="KW-0408">Iron</keyword>
<keyword id="KW-0472">Membrane</keyword>
<keyword id="KW-0479">Metal-binding</keyword>
<keyword id="KW-0560">Oxidoreductase</keyword>
<keyword id="KW-1185">Reference proteome</keyword>
<keyword id="KW-0812">Transmembrane</keyword>
<keyword id="KW-1133">Transmembrane helix</keyword>
<keyword id="KW-0813">Transport</keyword>
<feature type="chain" id="PRO_0000199972" description="Superoxide oxidase CybB">
    <location>
        <begin position="1"/>
        <end position="176"/>
    </location>
</feature>
<feature type="topological domain" description="Cytoplasmic" evidence="1">
    <location>
        <begin position="1"/>
        <end position="7"/>
    </location>
</feature>
<feature type="transmembrane region" description="Helical" evidence="1">
    <location>
        <begin position="8"/>
        <end position="29"/>
    </location>
</feature>
<feature type="topological domain" description="Periplasmic" evidence="1">
    <location>
        <begin position="30"/>
        <end position="39"/>
    </location>
</feature>
<feature type="transmembrane region" description="Helical" evidence="1">
    <location>
        <begin position="40"/>
        <end position="64"/>
    </location>
</feature>
<feature type="topological domain" description="Cytoplasmic" evidence="1">
    <location>
        <begin position="65"/>
        <end position="77"/>
    </location>
</feature>
<feature type="transmembrane region" description="Helical" evidence="1">
    <location>
        <begin position="78"/>
        <end position="103"/>
    </location>
</feature>
<feature type="topological domain" description="Periplasmic" evidence="1">
    <location>
        <begin position="104"/>
        <end position="135"/>
    </location>
</feature>
<feature type="transmembrane region" description="Helical" evidence="1">
    <location>
        <begin position="136"/>
        <end position="158"/>
    </location>
</feature>
<feature type="topological domain" description="Cytoplasmic" evidence="1">
    <location>
        <begin position="159"/>
        <end position="176"/>
    </location>
</feature>
<feature type="binding site" description="axial binding residue" evidence="1">
    <location>
        <position position="13"/>
    </location>
    <ligand>
        <name>heme b</name>
        <dbReference type="ChEBI" id="CHEBI:60344"/>
        <label>1</label>
    </ligand>
    <ligandPart>
        <name>Fe</name>
        <dbReference type="ChEBI" id="CHEBI:18248"/>
    </ligandPart>
</feature>
<feature type="binding site" description="axial binding residue" evidence="1">
    <location>
        <position position="45"/>
    </location>
    <ligand>
        <name>heme b</name>
        <dbReference type="ChEBI" id="CHEBI:60344"/>
        <label>2</label>
    </ligand>
    <ligandPart>
        <name>Fe</name>
        <dbReference type="ChEBI" id="CHEBI:18248"/>
    </ligandPart>
</feature>
<feature type="binding site" description="axial binding residue" evidence="1">
    <location>
        <position position="137"/>
    </location>
    <ligand>
        <name>heme b</name>
        <dbReference type="ChEBI" id="CHEBI:60344"/>
        <label>2</label>
    </ligand>
    <ligandPart>
        <name>Fe</name>
        <dbReference type="ChEBI" id="CHEBI:18248"/>
    </ligandPart>
</feature>
<feature type="binding site" description="axial binding residue" evidence="1">
    <location>
        <position position="151"/>
    </location>
    <ligand>
        <name>heme b</name>
        <dbReference type="ChEBI" id="CHEBI:60344"/>
        <label>1</label>
    </ligand>
    <ligandPart>
        <name>Fe</name>
        <dbReference type="ChEBI" id="CHEBI:18248"/>
    </ligandPart>
</feature>
<organism>
    <name type="scientific">Shigella flexneri</name>
    <dbReference type="NCBI Taxonomy" id="623"/>
    <lineage>
        <taxon>Bacteria</taxon>
        <taxon>Pseudomonadati</taxon>
        <taxon>Pseudomonadota</taxon>
        <taxon>Gammaproteobacteria</taxon>
        <taxon>Enterobacterales</taxon>
        <taxon>Enterobacteriaceae</taxon>
        <taxon>Shigella</taxon>
    </lineage>
</organism>
<reference key="1">
    <citation type="journal article" date="2002" name="Nucleic Acids Res.">
        <title>Genome sequence of Shigella flexneri 2a: insights into pathogenicity through comparison with genomes of Escherichia coli K12 and O157.</title>
        <authorList>
            <person name="Jin Q."/>
            <person name="Yuan Z."/>
            <person name="Xu J."/>
            <person name="Wang Y."/>
            <person name="Shen Y."/>
            <person name="Lu W."/>
            <person name="Wang J."/>
            <person name="Liu H."/>
            <person name="Yang J."/>
            <person name="Yang F."/>
            <person name="Zhang X."/>
            <person name="Zhang J."/>
            <person name="Yang G."/>
            <person name="Wu H."/>
            <person name="Qu D."/>
            <person name="Dong J."/>
            <person name="Sun L."/>
            <person name="Xue Y."/>
            <person name="Zhao A."/>
            <person name="Gao Y."/>
            <person name="Zhu J."/>
            <person name="Kan B."/>
            <person name="Ding K."/>
            <person name="Chen S."/>
            <person name="Cheng H."/>
            <person name="Yao Z."/>
            <person name="He B."/>
            <person name="Chen R."/>
            <person name="Ma D."/>
            <person name="Qiang B."/>
            <person name="Wen Y."/>
            <person name="Hou Y."/>
            <person name="Yu J."/>
        </authorList>
    </citation>
    <scope>NUCLEOTIDE SEQUENCE [LARGE SCALE GENOMIC DNA]</scope>
    <source>
        <strain>301 / Serotype 2a</strain>
    </source>
</reference>
<reference key="2">
    <citation type="journal article" date="2003" name="Infect. Immun.">
        <title>Complete genome sequence and comparative genomics of Shigella flexneri serotype 2a strain 2457T.</title>
        <authorList>
            <person name="Wei J."/>
            <person name="Goldberg M.B."/>
            <person name="Burland V."/>
            <person name="Venkatesan M.M."/>
            <person name="Deng W."/>
            <person name="Fournier G."/>
            <person name="Mayhew G.F."/>
            <person name="Plunkett G. III"/>
            <person name="Rose D.J."/>
            <person name="Darling A."/>
            <person name="Mau B."/>
            <person name="Perna N.T."/>
            <person name="Payne S.M."/>
            <person name="Runyen-Janecky L.J."/>
            <person name="Zhou S."/>
            <person name="Schwartz D.C."/>
            <person name="Blattner F.R."/>
        </authorList>
    </citation>
    <scope>NUCLEOTIDE SEQUENCE [LARGE SCALE GENOMIC DNA]</scope>
    <source>
        <strain>ATCC 700930 / 2457T / Serotype 2a</strain>
    </source>
</reference>
<sequence>MENKYSRLQISIHWLVFLLVIAAYCAMEFRGFFPRSDRPLINMIHVSCGISILVLMVVRLLLRLKYPTPPIIPKPKPMMTGLAHLGHLVIYLLFIALPVIGLVMMYNRGNPWFAFGLTMPYASEANFERVDSLKSWHETLANLGYFVIGLHAAAALAHHYFWKDNTLLRMMPRKRS</sequence>
<protein>
    <recommendedName>
        <fullName evidence="1">Superoxide oxidase CybB</fullName>
        <shortName evidence="1">SOO</shortName>
        <ecNumber evidence="1">1.10.3.17</ecNumber>
    </recommendedName>
    <alternativeName>
        <fullName evidence="1">Cytochrome b-561</fullName>
    </alternativeName>
    <alternativeName>
        <fullName evidence="1">Cytochrome b561</fullName>
    </alternativeName>
    <alternativeName>
        <fullName evidence="1">Superoxide:quinone oxidoreductase</fullName>
    </alternativeName>
    <alternativeName>
        <fullName evidence="1">Superoxide:ubiquinone oxidoreductase</fullName>
    </alternativeName>
</protein>
<gene>
    <name type="primary">cybB</name>
    <name type="ordered locus">SF1794</name>
    <name type="ordered locus">S1478</name>
</gene>
<accession>P0ABE6</accession>
<accession>P08732</accession>
<accession>P76095</accession>
<evidence type="ECO:0000250" key="1">
    <source>
        <dbReference type="UniProtKB" id="P0ABE5"/>
    </source>
</evidence>
<evidence type="ECO:0000305" key="2"/>
<comment type="function">
    <text evidence="1">B-type di-heme cytochrome. Catalyzes the oxidation of superoxide to molecular oxygen and transfers the extracted electrons to ubiquinone through the two hemes.</text>
</comment>
<comment type="catalytic activity">
    <reaction evidence="1">
        <text>a ubiquinol + 2 O2 = 2 superoxide + a ubiquinone + 2 H(+)</text>
        <dbReference type="Rhea" id="RHEA:29171"/>
        <dbReference type="Rhea" id="RHEA-COMP:9565"/>
        <dbReference type="Rhea" id="RHEA-COMP:9566"/>
        <dbReference type="ChEBI" id="CHEBI:15378"/>
        <dbReference type="ChEBI" id="CHEBI:15379"/>
        <dbReference type="ChEBI" id="CHEBI:16389"/>
        <dbReference type="ChEBI" id="CHEBI:17976"/>
        <dbReference type="ChEBI" id="CHEBI:18421"/>
        <dbReference type="EC" id="1.10.3.17"/>
    </reaction>
</comment>
<comment type="cofactor">
    <cofactor evidence="1">
        <name>heme b</name>
        <dbReference type="ChEBI" id="CHEBI:60344"/>
    </cofactor>
    <text evidence="1">Binds 2 heme b (iron-protoporphyrin IX) groups per molecule.</text>
</comment>
<comment type="subunit">
    <text evidence="1">Monomer.</text>
</comment>
<comment type="subcellular location">
    <subcellularLocation>
        <location evidence="1">Cell inner membrane</location>
        <topology evidence="1">Multi-pass membrane protein</topology>
    </subcellularLocation>
</comment>
<comment type="similarity">
    <text evidence="2">Belongs to the cytochrome b561 family.</text>
</comment>
<comment type="sequence caution" evidence="2">
    <conflict type="erroneous initiation">
        <sequence resource="EMBL-CDS" id="AAN43363"/>
    </conflict>
</comment>
<comment type="sequence caution" evidence="2">
    <conflict type="erroneous initiation">
        <sequence resource="EMBL-CDS" id="AAP16866"/>
    </conflict>
</comment>
<name>C561_SHIFL</name>